<protein>
    <recommendedName>
        <fullName evidence="1">Large ribosomal subunit protein bL31B</fullName>
    </recommendedName>
    <alternativeName>
        <fullName evidence="2">50S ribosomal protein L31 type B</fullName>
    </alternativeName>
</protein>
<proteinExistence type="inferred from homology"/>
<evidence type="ECO:0000255" key="1">
    <source>
        <dbReference type="HAMAP-Rule" id="MF_00502"/>
    </source>
</evidence>
<evidence type="ECO:0000305" key="2"/>
<accession>B0BSZ3</accession>
<sequence length="89" mass="10154">MKKGIHPENYREVLFYDGSVQMGWIIRSCAATTKTMVWEDGKEYPFYPLDTSSASHPVYTGKRREVNTEGRASKFNERFKGMAGLAAKK</sequence>
<gene>
    <name evidence="1" type="primary">rpmE2</name>
    <name type="ordered locus">APJL_1857</name>
</gene>
<organism>
    <name type="scientific">Actinobacillus pleuropneumoniae serotype 3 (strain JL03)</name>
    <dbReference type="NCBI Taxonomy" id="434271"/>
    <lineage>
        <taxon>Bacteria</taxon>
        <taxon>Pseudomonadati</taxon>
        <taxon>Pseudomonadota</taxon>
        <taxon>Gammaproteobacteria</taxon>
        <taxon>Pasteurellales</taxon>
        <taxon>Pasteurellaceae</taxon>
        <taxon>Actinobacillus</taxon>
    </lineage>
</organism>
<comment type="subunit">
    <text evidence="1">Part of the 50S ribosomal subunit.</text>
</comment>
<comment type="similarity">
    <text evidence="1">Belongs to the bacterial ribosomal protein bL31 family. Type B subfamily.</text>
</comment>
<feature type="chain" id="PRO_1000126780" description="Large ribosomal subunit protein bL31B">
    <location>
        <begin position="1"/>
        <end position="89"/>
    </location>
</feature>
<dbReference type="EMBL" id="CP000687">
    <property type="protein sequence ID" value="ABY70407.1"/>
    <property type="molecule type" value="Genomic_DNA"/>
</dbReference>
<dbReference type="RefSeq" id="WP_005599422.1">
    <property type="nucleotide sequence ID" value="NC_010278.1"/>
</dbReference>
<dbReference type="SMR" id="B0BSZ3"/>
<dbReference type="KEGG" id="apj:APJL_1857"/>
<dbReference type="HOGENOM" id="CLU_114306_2_1_6"/>
<dbReference type="Proteomes" id="UP000008547">
    <property type="component" value="Chromosome"/>
</dbReference>
<dbReference type="GO" id="GO:1990904">
    <property type="term" value="C:ribonucleoprotein complex"/>
    <property type="evidence" value="ECO:0007669"/>
    <property type="project" value="UniProtKB-KW"/>
</dbReference>
<dbReference type="GO" id="GO:0005840">
    <property type="term" value="C:ribosome"/>
    <property type="evidence" value="ECO:0007669"/>
    <property type="project" value="UniProtKB-KW"/>
</dbReference>
<dbReference type="GO" id="GO:0003735">
    <property type="term" value="F:structural constituent of ribosome"/>
    <property type="evidence" value="ECO:0007669"/>
    <property type="project" value="InterPro"/>
</dbReference>
<dbReference type="GO" id="GO:0006412">
    <property type="term" value="P:translation"/>
    <property type="evidence" value="ECO:0007669"/>
    <property type="project" value="UniProtKB-UniRule"/>
</dbReference>
<dbReference type="Gene3D" id="4.10.830.30">
    <property type="entry name" value="Ribosomal protein L31"/>
    <property type="match status" value="1"/>
</dbReference>
<dbReference type="HAMAP" id="MF_00502">
    <property type="entry name" value="Ribosomal_bL31_2"/>
    <property type="match status" value="1"/>
</dbReference>
<dbReference type="InterPro" id="IPR034704">
    <property type="entry name" value="Ribosomal_bL28/bL31-like_sf"/>
</dbReference>
<dbReference type="InterPro" id="IPR002150">
    <property type="entry name" value="Ribosomal_bL31"/>
</dbReference>
<dbReference type="InterPro" id="IPR027493">
    <property type="entry name" value="Ribosomal_bL31_B"/>
</dbReference>
<dbReference type="InterPro" id="IPR042105">
    <property type="entry name" value="Ribosomal_bL31_sf"/>
</dbReference>
<dbReference type="NCBIfam" id="TIGR00105">
    <property type="entry name" value="L31"/>
    <property type="match status" value="1"/>
</dbReference>
<dbReference type="NCBIfam" id="NF002462">
    <property type="entry name" value="PRK01678.1"/>
    <property type="match status" value="1"/>
</dbReference>
<dbReference type="PANTHER" id="PTHR33280">
    <property type="entry name" value="50S RIBOSOMAL PROTEIN L31, CHLOROPLASTIC"/>
    <property type="match status" value="1"/>
</dbReference>
<dbReference type="PANTHER" id="PTHR33280:SF1">
    <property type="entry name" value="LARGE RIBOSOMAL SUBUNIT PROTEIN BL31C"/>
    <property type="match status" value="1"/>
</dbReference>
<dbReference type="Pfam" id="PF01197">
    <property type="entry name" value="Ribosomal_L31"/>
    <property type="match status" value="1"/>
</dbReference>
<dbReference type="PRINTS" id="PR01249">
    <property type="entry name" value="RIBOSOMALL31"/>
</dbReference>
<dbReference type="SUPFAM" id="SSF143800">
    <property type="entry name" value="L28p-like"/>
    <property type="match status" value="1"/>
</dbReference>
<dbReference type="PROSITE" id="PS01143">
    <property type="entry name" value="RIBOSOMAL_L31"/>
    <property type="match status" value="1"/>
</dbReference>
<keyword id="KW-0687">Ribonucleoprotein</keyword>
<keyword id="KW-0689">Ribosomal protein</keyword>
<reference key="1">
    <citation type="journal article" date="2008" name="PLoS ONE">
        <title>Genome biology of Actinobacillus pleuropneumoniae JL03, an isolate of serotype 3 prevalent in China.</title>
        <authorList>
            <person name="Xu Z."/>
            <person name="Zhou Y."/>
            <person name="Li L."/>
            <person name="Zhou R."/>
            <person name="Xiao S."/>
            <person name="Wan Y."/>
            <person name="Zhang S."/>
            <person name="Wang K."/>
            <person name="Li W."/>
            <person name="Li L."/>
            <person name="Jin H."/>
            <person name="Kang M."/>
            <person name="Dalai B."/>
            <person name="Li T."/>
            <person name="Liu L."/>
            <person name="Cheng Y."/>
            <person name="Zhang L."/>
            <person name="Xu T."/>
            <person name="Zheng H."/>
            <person name="Pu S."/>
            <person name="Wang B."/>
            <person name="Gu W."/>
            <person name="Zhang X.L."/>
            <person name="Zhu G.-F."/>
            <person name="Wang S."/>
            <person name="Zhao G.-P."/>
            <person name="Chen H."/>
        </authorList>
    </citation>
    <scope>NUCLEOTIDE SEQUENCE [LARGE SCALE GENOMIC DNA]</scope>
    <source>
        <strain>JL03</strain>
    </source>
</reference>
<name>RL31B_ACTPJ</name>